<organismHost>
    <name type="scientific">Homo sapiens</name>
    <name type="common">Human</name>
    <dbReference type="NCBI Taxonomy" id="9606"/>
</organismHost>
<reference key="1">
    <citation type="journal article" date="1994" name="Curr. Top. Microbiol. Immunol.">
        <title>Primer-directed sequencing of human papillomavirus types.</title>
        <authorList>
            <person name="Delius H."/>
            <person name="Hofmann B."/>
        </authorList>
    </citation>
    <scope>NUCLEOTIDE SEQUENCE [GENOMIC DNA]</scope>
</reference>
<sequence length="520" mass="57019">MARARRTKRDSATNIYRTCKQAGTCPPDVINKVEQTTIADKILQYGSAGVFFGGLGISTGKGTGGATGYVPLGEGPVRVGGTATVIRPSLVPDTIGPSDIIPVDTLNPVEPTTSSIVPLTEASGSDLLPGEVETIAEVHPTPSIPSTDTPVTTTSSGASAVLEVAPEPVPPSRVRVTRTQYHNPSFQILTESTPTQGESSLADHILVTSGSGGQTIGSSGSDLIELQEFPTRYSFEIEEPTPPRQSSTPIQRLRTAFRRRGGLTNRRLVQQVAVDDPIFLTQPSRLVSFQFDNPAFEEEVTQIFEQDLDNFREPPNRDFLDVQTLGRPQYSETPSGYIRVSRLGQRRTIRTRSGAQIGSQVHFYRDLSTIDSEDPIELQLLGQHSGDASIVQGNTESTFININIDENPLAEDYSITANSEDLLLDEAQEDFSGSQLVVGGRRSTSTYTVPQFETTRSGSYYTQDTKGYYVAYPEDRSTSKDIIYPMPDLPVVIIHTYDTSGDFYLHPSLRKRFKRKRKYL</sequence>
<organism>
    <name type="scientific">Human papillomavirus 19</name>
    <dbReference type="NCBI Taxonomy" id="10608"/>
    <lineage>
        <taxon>Viruses</taxon>
        <taxon>Monodnaviria</taxon>
        <taxon>Shotokuvirae</taxon>
        <taxon>Cossaviricota</taxon>
        <taxon>Papovaviricetes</taxon>
        <taxon>Zurhausenvirales</taxon>
        <taxon>Papillomaviridae</taxon>
        <taxon>Firstpapillomavirinae</taxon>
        <taxon>Betapapillomavirus</taxon>
        <taxon>Betapapillomavirus 1</taxon>
    </lineage>
</organism>
<keyword id="KW-0167">Capsid protein</keyword>
<keyword id="KW-1176">Cytoplasmic inwards viral transport</keyword>
<keyword id="KW-1015">Disulfide bond</keyword>
<keyword id="KW-0238">DNA-binding</keyword>
<keyword id="KW-1039">Host endosome</keyword>
<keyword id="KW-1040">Host Golgi apparatus</keyword>
<keyword id="KW-1048">Host nucleus</keyword>
<keyword id="KW-0945">Host-virus interaction</keyword>
<keyword id="KW-0426">Late protein</keyword>
<keyword id="KW-1177">Microtubular inwards viral transport</keyword>
<keyword id="KW-0597">Phosphoprotein</keyword>
<keyword id="KW-1163">Viral penetration into host nucleus</keyword>
<keyword id="KW-0946">Virion</keyword>
<keyword id="KW-1160">Virus entry into host cell</keyword>
<comment type="function">
    <text evidence="1">Minor protein of the capsid that localizes along the inner surface of the virion, within the central cavities beneath the L1 pentamers. Plays a role in capsid stabilization through interaction with the major capsid protein L1. Once the virion enters the host cell, L2 escorts the genomic DNA into the nucleus by promoting escape from the endosomal compartments and traffic through the host Golgi network. Mechanistically, the C-terminus of L2 possesses a cell-penetrating peptide that protudes from the host endosome, interacts with host cytoplasmic retromer cargo and thereby mediates the capsid delivery to the host trans-Golgi network. Plays a role through its interaction with host dynein in the intracellular microtubule-dependent transport of viral capsid toward the nucleus. Mediates the viral genome import into the nucleus through binding to host importins. Once within the nucleus, L2 localizes viral genomes to host PML bodies in order to activate early gene expression for establishment of infection. Later on, promotes late gene expression by interacting with the viral E2 protein and by inhibiting its transcriptional activation functions. During virion assembly, encapsidates the genome by direct interaction with the viral DNA.</text>
</comment>
<comment type="subunit">
    <text evidence="1">Interacts with major capsid protein L1. Interacts with E2; this interaction inhibits E2 transcriptional activity but not the DNA replication function E2. Interacts with host GADD45GIP1. Interacts with host HSPA8; this interaction is required for L2 nuclear translocation. Interacts with host importins KPNB2 and KPNB3. Forms a complex with importin alpha2-beta1 heterodimers via interaction with the importin alpha2 adapter. Interacts with host DYNLT1; this interaction is essential for virus intracellular transport during entry. Interacts (via C-terminus) with host retromer subunits VPS35 and VPS29.</text>
</comment>
<comment type="subcellular location">
    <subcellularLocation>
        <location evidence="1">Virion</location>
    </subcellularLocation>
    <subcellularLocation>
        <location evidence="1">Host nucleus</location>
    </subcellularLocation>
    <subcellularLocation>
        <location evidence="1">Host early endosome</location>
    </subcellularLocation>
    <subcellularLocation>
        <location evidence="1">Host Golgi apparatus</location>
    </subcellularLocation>
</comment>
<comment type="PTM">
    <text evidence="1">Highly phosphorylated.</text>
</comment>
<comment type="similarity">
    <text evidence="1">Belongs to the papillomaviridae L2 protein family.</text>
</comment>
<proteinExistence type="inferred from homology"/>
<dbReference type="EMBL" id="X74470">
    <property type="protein sequence ID" value="CAA52522.1"/>
    <property type="molecule type" value="Genomic_DNA"/>
</dbReference>
<dbReference type="PIR" id="S36489">
    <property type="entry name" value="S36489"/>
</dbReference>
<dbReference type="Proteomes" id="UP000009110">
    <property type="component" value="Genome"/>
</dbReference>
<dbReference type="GO" id="GO:0043657">
    <property type="term" value="C:host cell"/>
    <property type="evidence" value="ECO:0007669"/>
    <property type="project" value="GOC"/>
</dbReference>
<dbReference type="GO" id="GO:0044174">
    <property type="term" value="C:host cell endosome"/>
    <property type="evidence" value="ECO:0007669"/>
    <property type="project" value="UniProtKB-KW"/>
</dbReference>
<dbReference type="GO" id="GO:0044177">
    <property type="term" value="C:host cell Golgi apparatus"/>
    <property type="evidence" value="ECO:0007669"/>
    <property type="project" value="UniProtKB-SubCell"/>
</dbReference>
<dbReference type="GO" id="GO:0042025">
    <property type="term" value="C:host cell nucleus"/>
    <property type="evidence" value="ECO:0007669"/>
    <property type="project" value="UniProtKB-SubCell"/>
</dbReference>
<dbReference type="GO" id="GO:0019028">
    <property type="term" value="C:viral capsid"/>
    <property type="evidence" value="ECO:0007669"/>
    <property type="project" value="UniProtKB-UniRule"/>
</dbReference>
<dbReference type="GO" id="GO:0003677">
    <property type="term" value="F:DNA binding"/>
    <property type="evidence" value="ECO:0007669"/>
    <property type="project" value="UniProtKB-UniRule"/>
</dbReference>
<dbReference type="GO" id="GO:0005198">
    <property type="term" value="F:structural molecule activity"/>
    <property type="evidence" value="ECO:0007669"/>
    <property type="project" value="UniProtKB-UniRule"/>
</dbReference>
<dbReference type="GO" id="GO:0075521">
    <property type="term" value="P:microtubule-dependent intracellular transport of viral material towards nucleus"/>
    <property type="evidence" value="ECO:0007669"/>
    <property type="project" value="UniProtKB-UniRule"/>
</dbReference>
<dbReference type="GO" id="GO:0046718">
    <property type="term" value="P:symbiont entry into host cell"/>
    <property type="evidence" value="ECO:0007669"/>
    <property type="project" value="UniProtKB-KW"/>
</dbReference>
<dbReference type="GO" id="GO:0075732">
    <property type="term" value="P:viral penetration into host nucleus"/>
    <property type="evidence" value="ECO:0007669"/>
    <property type="project" value="UniProtKB-KW"/>
</dbReference>
<dbReference type="HAMAP" id="MF_04003">
    <property type="entry name" value="PPV_L2"/>
    <property type="match status" value="1"/>
</dbReference>
<dbReference type="InterPro" id="IPR000784">
    <property type="entry name" value="Late_L2"/>
</dbReference>
<dbReference type="Pfam" id="PF00513">
    <property type="entry name" value="Late_protein_L2"/>
    <property type="match status" value="1"/>
</dbReference>
<gene>
    <name evidence="1" type="primary">L2</name>
</gene>
<name>VL2_HPV19</name>
<feature type="chain" id="PRO_0000133586" description="Minor capsid protein L2">
    <location>
        <begin position="1"/>
        <end position="520"/>
    </location>
</feature>
<feature type="short sequence motif" description="Nuclear localization signal" evidence="1">
    <location>
        <begin position="1"/>
        <end position="10"/>
    </location>
</feature>
<feature type="short sequence motif" description="Nuclear localization signal" evidence="1">
    <location>
        <begin position="511"/>
        <end position="519"/>
    </location>
</feature>
<feature type="disulfide bond" evidence="1">
    <location>
        <begin position="19"/>
        <end position="25"/>
    </location>
</feature>
<evidence type="ECO:0000255" key="1">
    <source>
        <dbReference type="HAMAP-Rule" id="MF_04003"/>
    </source>
</evidence>
<accession>P36752</accession>
<protein>
    <recommendedName>
        <fullName evidence="1">Minor capsid protein L2</fullName>
    </recommendedName>
</protein>